<accession>P74061</accession>
<name>RPE_SYNY3</name>
<gene>
    <name evidence="1" type="primary">rpe</name>
    <name type="ordered locus">sll0807</name>
</gene>
<proteinExistence type="evidence at protein level"/>
<protein>
    <recommendedName>
        <fullName evidence="1">Ribulose-phosphate 3-epimerase</fullName>
        <ecNumber evidence="1">5.1.3.1</ecNumber>
    </recommendedName>
</protein>
<dbReference type="EC" id="5.1.3.1" evidence="1"/>
<dbReference type="EMBL" id="BA000022">
    <property type="protein sequence ID" value="BAA18137.1"/>
    <property type="molecule type" value="Genomic_DNA"/>
</dbReference>
<dbReference type="PIR" id="S75576">
    <property type="entry name" value="S75576"/>
</dbReference>
<dbReference type="PDB" id="1TQJ">
    <property type="method" value="X-ray"/>
    <property type="resolution" value="1.60 A"/>
    <property type="chains" value="A/B/C/D/E/F=1-230"/>
</dbReference>
<dbReference type="PDBsum" id="1TQJ"/>
<dbReference type="SMR" id="P74061"/>
<dbReference type="FunCoup" id="P74061">
    <property type="interactions" value="516"/>
</dbReference>
<dbReference type="IntAct" id="P74061">
    <property type="interactions" value="1"/>
</dbReference>
<dbReference type="STRING" id="1148.gene:10499009"/>
<dbReference type="PaxDb" id="1148-1653221"/>
<dbReference type="EnsemblBacteria" id="BAA18137">
    <property type="protein sequence ID" value="BAA18137"/>
    <property type="gene ID" value="BAA18137"/>
</dbReference>
<dbReference type="KEGG" id="syn:sll0807"/>
<dbReference type="eggNOG" id="COG0036">
    <property type="taxonomic scope" value="Bacteria"/>
</dbReference>
<dbReference type="InParanoid" id="P74061"/>
<dbReference type="PhylomeDB" id="P74061"/>
<dbReference type="BRENDA" id="5.1.3.1">
    <property type="organism ID" value="6192"/>
</dbReference>
<dbReference type="EvolutionaryTrace" id="P74061"/>
<dbReference type="Proteomes" id="UP000001425">
    <property type="component" value="Chromosome"/>
</dbReference>
<dbReference type="GO" id="GO:0005829">
    <property type="term" value="C:cytosol"/>
    <property type="evidence" value="ECO:0000318"/>
    <property type="project" value="GO_Central"/>
</dbReference>
<dbReference type="GO" id="GO:0004750">
    <property type="term" value="F:D-ribulose-phosphate 3-epimerase activity"/>
    <property type="evidence" value="ECO:0000318"/>
    <property type="project" value="GO_Central"/>
</dbReference>
<dbReference type="GO" id="GO:0046872">
    <property type="term" value="F:metal ion binding"/>
    <property type="evidence" value="ECO:0000318"/>
    <property type="project" value="GO_Central"/>
</dbReference>
<dbReference type="GO" id="GO:0005975">
    <property type="term" value="P:carbohydrate metabolic process"/>
    <property type="evidence" value="ECO:0000318"/>
    <property type="project" value="GO_Central"/>
</dbReference>
<dbReference type="GO" id="GO:0019323">
    <property type="term" value="P:pentose catabolic process"/>
    <property type="evidence" value="ECO:0007669"/>
    <property type="project" value="UniProtKB-UniRule"/>
</dbReference>
<dbReference type="GO" id="GO:0009052">
    <property type="term" value="P:pentose-phosphate shunt, non-oxidative branch"/>
    <property type="evidence" value="ECO:0000318"/>
    <property type="project" value="GO_Central"/>
</dbReference>
<dbReference type="CDD" id="cd00429">
    <property type="entry name" value="RPE"/>
    <property type="match status" value="1"/>
</dbReference>
<dbReference type="FunFam" id="3.20.20.70:FF:000004">
    <property type="entry name" value="Ribulose-phosphate 3-epimerase"/>
    <property type="match status" value="1"/>
</dbReference>
<dbReference type="Gene3D" id="3.20.20.70">
    <property type="entry name" value="Aldolase class I"/>
    <property type="match status" value="1"/>
</dbReference>
<dbReference type="HAMAP" id="MF_02227">
    <property type="entry name" value="RPE"/>
    <property type="match status" value="1"/>
</dbReference>
<dbReference type="InterPro" id="IPR013785">
    <property type="entry name" value="Aldolase_TIM"/>
</dbReference>
<dbReference type="InterPro" id="IPR026019">
    <property type="entry name" value="Ribul_P_3_epim"/>
</dbReference>
<dbReference type="InterPro" id="IPR000056">
    <property type="entry name" value="Ribul_P_3_epim-like"/>
</dbReference>
<dbReference type="InterPro" id="IPR011060">
    <property type="entry name" value="RibuloseP-bd_barrel"/>
</dbReference>
<dbReference type="NCBIfam" id="NF004076">
    <property type="entry name" value="PRK05581.1-4"/>
    <property type="match status" value="1"/>
</dbReference>
<dbReference type="NCBIfam" id="TIGR01163">
    <property type="entry name" value="rpe"/>
    <property type="match status" value="1"/>
</dbReference>
<dbReference type="PANTHER" id="PTHR11749">
    <property type="entry name" value="RIBULOSE-5-PHOSPHATE-3-EPIMERASE"/>
    <property type="match status" value="1"/>
</dbReference>
<dbReference type="Pfam" id="PF00834">
    <property type="entry name" value="Ribul_P_3_epim"/>
    <property type="match status" value="1"/>
</dbReference>
<dbReference type="PIRSF" id="PIRSF001461">
    <property type="entry name" value="RPE"/>
    <property type="match status" value="1"/>
</dbReference>
<dbReference type="SUPFAM" id="SSF51366">
    <property type="entry name" value="Ribulose-phoshate binding barrel"/>
    <property type="match status" value="1"/>
</dbReference>
<dbReference type="PROSITE" id="PS01085">
    <property type="entry name" value="RIBUL_P_3_EPIMER_1"/>
    <property type="match status" value="1"/>
</dbReference>
<dbReference type="PROSITE" id="PS01086">
    <property type="entry name" value="RIBUL_P_3_EPIMER_2"/>
    <property type="match status" value="1"/>
</dbReference>
<evidence type="ECO:0000255" key="1">
    <source>
        <dbReference type="HAMAP-Rule" id="MF_02227"/>
    </source>
</evidence>
<evidence type="ECO:0000269" key="2">
    <source>
    </source>
</evidence>
<evidence type="ECO:0000269" key="3">
    <source>
    </source>
</evidence>
<evidence type="ECO:0007829" key="4">
    <source>
        <dbReference type="PDB" id="1TQJ"/>
    </source>
</evidence>
<feature type="initiator methionine" description="Removed" evidence="3">
    <location>
        <position position="1"/>
    </location>
</feature>
<feature type="chain" id="PRO_0000171582" description="Ribulose-phosphate 3-epimerase">
    <location>
        <begin position="2"/>
        <end position="230"/>
    </location>
</feature>
<feature type="active site" description="Proton acceptor" evidence="1">
    <location>
        <position position="37"/>
    </location>
</feature>
<feature type="active site" description="Proton donor" evidence="1">
    <location>
        <position position="179"/>
    </location>
</feature>
<feature type="binding site" evidence="1">
    <location>
        <position position="10"/>
    </location>
    <ligand>
        <name>substrate</name>
    </ligand>
</feature>
<feature type="binding site" evidence="1">
    <location>
        <position position="35"/>
    </location>
    <ligand>
        <name>a divalent metal cation</name>
        <dbReference type="ChEBI" id="CHEBI:60240"/>
    </ligand>
</feature>
<feature type="binding site" evidence="1">
    <location>
        <position position="37"/>
    </location>
    <ligand>
        <name>a divalent metal cation</name>
        <dbReference type="ChEBI" id="CHEBI:60240"/>
    </ligand>
</feature>
<feature type="binding site" evidence="1">
    <location>
        <position position="68"/>
    </location>
    <ligand>
        <name>a divalent metal cation</name>
        <dbReference type="ChEBI" id="CHEBI:60240"/>
    </ligand>
</feature>
<feature type="binding site" evidence="1">
    <location>
        <position position="68"/>
    </location>
    <ligand>
        <name>substrate</name>
    </ligand>
</feature>
<feature type="binding site" evidence="1">
    <location>
        <begin position="146"/>
        <end position="149"/>
    </location>
    <ligand>
        <name>substrate</name>
    </ligand>
</feature>
<feature type="binding site" evidence="1">
    <location>
        <begin position="179"/>
        <end position="181"/>
    </location>
    <ligand>
        <name>substrate</name>
    </ligand>
</feature>
<feature type="binding site" evidence="1">
    <location>
        <position position="179"/>
    </location>
    <ligand>
        <name>a divalent metal cation</name>
        <dbReference type="ChEBI" id="CHEBI:60240"/>
    </ligand>
</feature>
<feature type="binding site" evidence="1">
    <location>
        <begin position="201"/>
        <end position="202"/>
    </location>
    <ligand>
        <name>substrate</name>
    </ligand>
</feature>
<feature type="strand" evidence="4">
    <location>
        <begin position="6"/>
        <end position="10"/>
    </location>
</feature>
<feature type="helix" evidence="4">
    <location>
        <begin position="11"/>
        <end position="13"/>
    </location>
</feature>
<feature type="helix" evidence="4">
    <location>
        <begin position="16"/>
        <end position="18"/>
    </location>
</feature>
<feature type="helix" evidence="4">
    <location>
        <begin position="19"/>
        <end position="28"/>
    </location>
</feature>
<feature type="strand" evidence="4">
    <location>
        <begin position="32"/>
        <end position="45"/>
    </location>
</feature>
<feature type="helix" evidence="4">
    <location>
        <begin position="51"/>
        <end position="57"/>
    </location>
</feature>
<feature type="helix" evidence="4">
    <location>
        <begin position="58"/>
        <end position="60"/>
    </location>
</feature>
<feature type="strand" evidence="4">
    <location>
        <begin position="63"/>
        <end position="73"/>
    </location>
</feature>
<feature type="helix" evidence="4">
    <location>
        <begin position="74"/>
        <end position="76"/>
    </location>
</feature>
<feature type="helix" evidence="4">
    <location>
        <begin position="78"/>
        <end position="84"/>
    </location>
</feature>
<feature type="strand" evidence="4">
    <location>
        <begin position="87"/>
        <end position="92"/>
    </location>
</feature>
<feature type="turn" evidence="4">
    <location>
        <begin position="95"/>
        <end position="97"/>
    </location>
</feature>
<feature type="helix" evidence="4">
    <location>
        <begin position="101"/>
        <end position="110"/>
    </location>
</feature>
<feature type="strand" evidence="4">
    <location>
        <begin position="114"/>
        <end position="119"/>
    </location>
</feature>
<feature type="helix" evidence="4">
    <location>
        <begin position="125"/>
        <end position="128"/>
    </location>
</feature>
<feature type="turn" evidence="4">
    <location>
        <begin position="129"/>
        <end position="131"/>
    </location>
</feature>
<feature type="helix" evidence="4">
    <location>
        <begin position="132"/>
        <end position="134"/>
    </location>
</feature>
<feature type="strand" evidence="4">
    <location>
        <begin position="136"/>
        <end position="143"/>
    </location>
</feature>
<feature type="helix" evidence="4">
    <location>
        <begin position="154"/>
        <end position="156"/>
    </location>
</feature>
<feature type="helix" evidence="4">
    <location>
        <begin position="157"/>
        <end position="170"/>
    </location>
</feature>
<feature type="strand" evidence="4">
    <location>
        <begin position="175"/>
        <end position="181"/>
    </location>
</feature>
<feature type="turn" evidence="4">
    <location>
        <begin position="184"/>
        <end position="187"/>
    </location>
</feature>
<feature type="helix" evidence="4">
    <location>
        <begin position="188"/>
        <end position="193"/>
    </location>
</feature>
<feature type="strand" evidence="4">
    <location>
        <begin position="197"/>
        <end position="201"/>
    </location>
</feature>
<feature type="helix" evidence="4">
    <location>
        <begin position="202"/>
        <end position="205"/>
    </location>
</feature>
<feature type="helix" evidence="4">
    <location>
        <begin position="210"/>
        <end position="218"/>
    </location>
</feature>
<sequence>MSKNIVVAPSILSADFSRLGEEIKAVDEAGADWIHVDVMDGRFVPNITIGPLIVDAIRPLTKKTLDVHLMIVEPEKYVEDFAKAGADIISVHVEHNASPHLHRTLCQIRELGKKAGAVLNPSTPLDFLEYVLPVCDLILIMSVNPGFGGQSFIPEVLPKIRALRQMCDERGLDPWIEVDGGLKPNNTWQVLEAGANAIVAGSAVFNAPNYAEAIAGVRNSKRPEPQLATV</sequence>
<comment type="function">
    <text evidence="1">Catalyzes the reversible epimerization of D-ribulose 5-phosphate to D-xylulose 5-phosphate.</text>
</comment>
<comment type="catalytic activity">
    <reaction evidence="1">
        <text>D-ribulose 5-phosphate = D-xylulose 5-phosphate</text>
        <dbReference type="Rhea" id="RHEA:13677"/>
        <dbReference type="ChEBI" id="CHEBI:57737"/>
        <dbReference type="ChEBI" id="CHEBI:58121"/>
        <dbReference type="EC" id="5.1.3.1"/>
    </reaction>
</comment>
<comment type="cofactor">
    <cofactor evidence="1">
        <name>a divalent metal cation</name>
        <dbReference type="ChEBI" id="CHEBI:60240"/>
    </cofactor>
    <text evidence="1">Binds 1 divalent metal cation per subunit.</text>
</comment>
<comment type="pathway">
    <text evidence="1">Carbohydrate degradation.</text>
</comment>
<comment type="subunit">
    <text evidence="2">Homohexamer.</text>
</comment>
<comment type="similarity">
    <text evidence="1">Belongs to the ribulose-phosphate 3-epimerase family.</text>
</comment>
<reference key="1">
    <citation type="journal article" date="1996" name="DNA Res.">
        <title>Sequence analysis of the genome of the unicellular cyanobacterium Synechocystis sp. strain PCC6803. II. Sequence determination of the entire genome and assignment of potential protein-coding regions.</title>
        <authorList>
            <person name="Kaneko T."/>
            <person name="Sato S."/>
            <person name="Kotani H."/>
            <person name="Tanaka A."/>
            <person name="Asamizu E."/>
            <person name="Nakamura Y."/>
            <person name="Miyajima N."/>
            <person name="Hirosawa M."/>
            <person name="Sugiura M."/>
            <person name="Sasamoto S."/>
            <person name="Kimura T."/>
            <person name="Hosouchi T."/>
            <person name="Matsuno A."/>
            <person name="Muraki A."/>
            <person name="Nakazaki N."/>
            <person name="Naruo K."/>
            <person name="Okumura S."/>
            <person name="Shimpo S."/>
            <person name="Takeuchi C."/>
            <person name="Wada T."/>
            <person name="Watanabe A."/>
            <person name="Yamada M."/>
            <person name="Yasuda M."/>
            <person name="Tabata S."/>
        </authorList>
    </citation>
    <scope>NUCLEOTIDE SEQUENCE [LARGE SCALE GENOMIC DNA]</scope>
    <source>
        <strain>ATCC 27184 / PCC 6803 / Kazusa</strain>
    </source>
</reference>
<reference key="2">
    <citation type="journal article" date="1997" name="Electrophoresis">
        <title>Towards a proteome project of cyanobacterium Synechocystis sp. strain PCC6803: linking 130 protein spots with their respective genes.</title>
        <authorList>
            <person name="Sazuka T."/>
            <person name="Ohara O."/>
        </authorList>
    </citation>
    <scope>PROTEIN SEQUENCE OF 2-21</scope>
</reference>
<reference key="3">
    <citation type="journal article" date="2004" name="Acta Crystallogr. D">
        <title>Structure of D-ribulose 5-phosphate 3-epimerase from Synechocystis to 1.6 A resolution.</title>
        <authorList>
            <person name="Wise E.L."/>
            <person name="Akana J."/>
            <person name="Gerlt J.A."/>
            <person name="Rayment I."/>
        </authorList>
    </citation>
    <scope>X-RAY CRYSTALLOGRAPHY (1.6 ANGSTROMS)</scope>
    <scope>SUBUNIT</scope>
</reference>
<keyword id="KW-0002">3D-structure</keyword>
<keyword id="KW-0119">Carbohydrate metabolism</keyword>
<keyword id="KW-0903">Direct protein sequencing</keyword>
<keyword id="KW-0413">Isomerase</keyword>
<keyword id="KW-0479">Metal-binding</keyword>
<keyword id="KW-1185">Reference proteome</keyword>
<organism>
    <name type="scientific">Synechocystis sp. (strain ATCC 27184 / PCC 6803 / Kazusa)</name>
    <dbReference type="NCBI Taxonomy" id="1111708"/>
    <lineage>
        <taxon>Bacteria</taxon>
        <taxon>Bacillati</taxon>
        <taxon>Cyanobacteriota</taxon>
        <taxon>Cyanophyceae</taxon>
        <taxon>Synechococcales</taxon>
        <taxon>Merismopediaceae</taxon>
        <taxon>Synechocystis</taxon>
    </lineage>
</organism>